<proteinExistence type="inferred from homology"/>
<evidence type="ECO:0000255" key="1">
    <source>
        <dbReference type="HAMAP-Rule" id="MF_00021"/>
    </source>
</evidence>
<gene>
    <name evidence="1" type="primary">thiI</name>
    <name type="ordered locus">ETA_25240</name>
</gene>
<dbReference type="EC" id="2.8.1.4" evidence="1"/>
<dbReference type="EMBL" id="CU468135">
    <property type="protein sequence ID" value="CAO97570.1"/>
    <property type="molecule type" value="Genomic_DNA"/>
</dbReference>
<dbReference type="RefSeq" id="WP_012442235.1">
    <property type="nucleotide sequence ID" value="NC_010694.1"/>
</dbReference>
<dbReference type="SMR" id="B2VHS0"/>
<dbReference type="STRING" id="465817.ETA_25240"/>
<dbReference type="KEGG" id="eta:ETA_25240"/>
<dbReference type="eggNOG" id="COG0301">
    <property type="taxonomic scope" value="Bacteria"/>
</dbReference>
<dbReference type="eggNOG" id="COG0607">
    <property type="taxonomic scope" value="Bacteria"/>
</dbReference>
<dbReference type="HOGENOM" id="CLU_037952_4_1_6"/>
<dbReference type="OrthoDB" id="9773948at2"/>
<dbReference type="UniPathway" id="UPA00060"/>
<dbReference type="Proteomes" id="UP000001726">
    <property type="component" value="Chromosome"/>
</dbReference>
<dbReference type="GO" id="GO:0005829">
    <property type="term" value="C:cytosol"/>
    <property type="evidence" value="ECO:0007669"/>
    <property type="project" value="TreeGrafter"/>
</dbReference>
<dbReference type="GO" id="GO:0005524">
    <property type="term" value="F:ATP binding"/>
    <property type="evidence" value="ECO:0007669"/>
    <property type="project" value="UniProtKB-UniRule"/>
</dbReference>
<dbReference type="GO" id="GO:0004810">
    <property type="term" value="F:CCA tRNA nucleotidyltransferase activity"/>
    <property type="evidence" value="ECO:0007669"/>
    <property type="project" value="InterPro"/>
</dbReference>
<dbReference type="GO" id="GO:0000049">
    <property type="term" value="F:tRNA binding"/>
    <property type="evidence" value="ECO:0007669"/>
    <property type="project" value="UniProtKB-UniRule"/>
</dbReference>
<dbReference type="GO" id="GO:0140741">
    <property type="term" value="F:tRNA-uracil-4 sulfurtransferase activity"/>
    <property type="evidence" value="ECO:0007669"/>
    <property type="project" value="UniProtKB-EC"/>
</dbReference>
<dbReference type="GO" id="GO:0009228">
    <property type="term" value="P:thiamine biosynthetic process"/>
    <property type="evidence" value="ECO:0007669"/>
    <property type="project" value="UniProtKB-KW"/>
</dbReference>
<dbReference type="GO" id="GO:0009229">
    <property type="term" value="P:thiamine diphosphate biosynthetic process"/>
    <property type="evidence" value="ECO:0007669"/>
    <property type="project" value="UniProtKB-UniRule"/>
</dbReference>
<dbReference type="GO" id="GO:0052837">
    <property type="term" value="P:thiazole biosynthetic process"/>
    <property type="evidence" value="ECO:0007669"/>
    <property type="project" value="InterPro"/>
</dbReference>
<dbReference type="GO" id="GO:0002937">
    <property type="term" value="P:tRNA 4-thiouridine biosynthesis"/>
    <property type="evidence" value="ECO:0007669"/>
    <property type="project" value="TreeGrafter"/>
</dbReference>
<dbReference type="CDD" id="cd01712">
    <property type="entry name" value="PPase_ThiI"/>
    <property type="match status" value="1"/>
</dbReference>
<dbReference type="CDD" id="cd11716">
    <property type="entry name" value="THUMP_ThiI"/>
    <property type="match status" value="1"/>
</dbReference>
<dbReference type="FunFam" id="3.30.2130.30:FF:000002">
    <property type="entry name" value="tRNA sulfurtransferase"/>
    <property type="match status" value="1"/>
</dbReference>
<dbReference type="FunFam" id="3.40.250.10:FF:000003">
    <property type="entry name" value="tRNA sulfurtransferase"/>
    <property type="match status" value="1"/>
</dbReference>
<dbReference type="FunFam" id="3.40.50.620:FF:000029">
    <property type="entry name" value="tRNA sulfurtransferase"/>
    <property type="match status" value="1"/>
</dbReference>
<dbReference type="Gene3D" id="3.30.2130.30">
    <property type="match status" value="1"/>
</dbReference>
<dbReference type="Gene3D" id="3.40.50.620">
    <property type="entry name" value="HUPs"/>
    <property type="match status" value="1"/>
</dbReference>
<dbReference type="Gene3D" id="3.40.250.10">
    <property type="entry name" value="Rhodanese-like domain"/>
    <property type="match status" value="1"/>
</dbReference>
<dbReference type="HAMAP" id="MF_00021">
    <property type="entry name" value="ThiI"/>
    <property type="match status" value="1"/>
</dbReference>
<dbReference type="InterPro" id="IPR001763">
    <property type="entry name" value="Rhodanese-like_dom"/>
</dbReference>
<dbReference type="InterPro" id="IPR036873">
    <property type="entry name" value="Rhodanese-like_dom_sf"/>
</dbReference>
<dbReference type="InterPro" id="IPR014729">
    <property type="entry name" value="Rossmann-like_a/b/a_fold"/>
</dbReference>
<dbReference type="InterPro" id="IPR020536">
    <property type="entry name" value="ThiI_AANH"/>
</dbReference>
<dbReference type="InterPro" id="IPR054173">
    <property type="entry name" value="ThiI_fer"/>
</dbReference>
<dbReference type="InterPro" id="IPR049961">
    <property type="entry name" value="ThiI_N"/>
</dbReference>
<dbReference type="InterPro" id="IPR026340">
    <property type="entry name" value="THII_Thiazole_biosynth_dom"/>
</dbReference>
<dbReference type="InterPro" id="IPR004114">
    <property type="entry name" value="THUMP_dom"/>
</dbReference>
<dbReference type="InterPro" id="IPR049962">
    <property type="entry name" value="THUMP_ThiI"/>
</dbReference>
<dbReference type="InterPro" id="IPR003720">
    <property type="entry name" value="tRNA_STrfase"/>
</dbReference>
<dbReference type="InterPro" id="IPR050102">
    <property type="entry name" value="tRNA_sulfurtransferase_ThiI"/>
</dbReference>
<dbReference type="NCBIfam" id="TIGR04271">
    <property type="entry name" value="ThiI_C_thiazole"/>
    <property type="match status" value="1"/>
</dbReference>
<dbReference type="NCBIfam" id="TIGR00342">
    <property type="entry name" value="tRNA uracil 4-sulfurtransferase ThiI"/>
    <property type="match status" value="1"/>
</dbReference>
<dbReference type="PANTHER" id="PTHR43209">
    <property type="entry name" value="TRNA SULFURTRANSFERASE"/>
    <property type="match status" value="1"/>
</dbReference>
<dbReference type="PANTHER" id="PTHR43209:SF1">
    <property type="entry name" value="TRNA SULFURTRANSFERASE"/>
    <property type="match status" value="1"/>
</dbReference>
<dbReference type="Pfam" id="PF02568">
    <property type="entry name" value="ThiI"/>
    <property type="match status" value="1"/>
</dbReference>
<dbReference type="Pfam" id="PF22025">
    <property type="entry name" value="ThiI_fer"/>
    <property type="match status" value="1"/>
</dbReference>
<dbReference type="Pfam" id="PF02926">
    <property type="entry name" value="THUMP"/>
    <property type="match status" value="1"/>
</dbReference>
<dbReference type="SMART" id="SM00981">
    <property type="entry name" value="THUMP"/>
    <property type="match status" value="1"/>
</dbReference>
<dbReference type="SUPFAM" id="SSF52402">
    <property type="entry name" value="Adenine nucleotide alpha hydrolases-like"/>
    <property type="match status" value="1"/>
</dbReference>
<dbReference type="SUPFAM" id="SSF52821">
    <property type="entry name" value="Rhodanese/Cell cycle control phosphatase"/>
    <property type="match status" value="1"/>
</dbReference>
<dbReference type="SUPFAM" id="SSF143437">
    <property type="entry name" value="THUMP domain-like"/>
    <property type="match status" value="1"/>
</dbReference>
<dbReference type="PROSITE" id="PS50206">
    <property type="entry name" value="RHODANESE_3"/>
    <property type="match status" value="1"/>
</dbReference>
<dbReference type="PROSITE" id="PS51165">
    <property type="entry name" value="THUMP"/>
    <property type="match status" value="1"/>
</dbReference>
<organism>
    <name type="scientific">Erwinia tasmaniensis (strain DSM 17950 / CFBP 7177 / CIP 109463 / NCPPB 4357 / Et1/99)</name>
    <dbReference type="NCBI Taxonomy" id="465817"/>
    <lineage>
        <taxon>Bacteria</taxon>
        <taxon>Pseudomonadati</taxon>
        <taxon>Pseudomonadota</taxon>
        <taxon>Gammaproteobacteria</taxon>
        <taxon>Enterobacterales</taxon>
        <taxon>Erwiniaceae</taxon>
        <taxon>Erwinia</taxon>
    </lineage>
</organism>
<keyword id="KW-0067">ATP-binding</keyword>
<keyword id="KW-0963">Cytoplasm</keyword>
<keyword id="KW-1015">Disulfide bond</keyword>
<keyword id="KW-0547">Nucleotide-binding</keyword>
<keyword id="KW-0676">Redox-active center</keyword>
<keyword id="KW-1185">Reference proteome</keyword>
<keyword id="KW-0694">RNA-binding</keyword>
<keyword id="KW-0784">Thiamine biosynthesis</keyword>
<keyword id="KW-0808">Transferase</keyword>
<keyword id="KW-0820">tRNA-binding</keyword>
<name>THII_ERWT9</name>
<comment type="function">
    <text evidence="1">Catalyzes the ATP-dependent transfer of a sulfur to tRNA to produce 4-thiouridine in position 8 of tRNAs, which functions as a near-UV photosensor. Also catalyzes the transfer of sulfur to the sulfur carrier protein ThiS, forming ThiS-thiocarboxylate. This is a step in the synthesis of thiazole, in the thiamine biosynthesis pathway. The sulfur is donated as persulfide by IscS.</text>
</comment>
<comment type="catalytic activity">
    <reaction evidence="1">
        <text>[ThiI sulfur-carrier protein]-S-sulfanyl-L-cysteine + a uridine in tRNA + 2 reduced [2Fe-2S]-[ferredoxin] + ATP + H(+) = [ThiI sulfur-carrier protein]-L-cysteine + a 4-thiouridine in tRNA + 2 oxidized [2Fe-2S]-[ferredoxin] + AMP + diphosphate</text>
        <dbReference type="Rhea" id="RHEA:24176"/>
        <dbReference type="Rhea" id="RHEA-COMP:10000"/>
        <dbReference type="Rhea" id="RHEA-COMP:10001"/>
        <dbReference type="Rhea" id="RHEA-COMP:13337"/>
        <dbReference type="Rhea" id="RHEA-COMP:13338"/>
        <dbReference type="Rhea" id="RHEA-COMP:13339"/>
        <dbReference type="Rhea" id="RHEA-COMP:13340"/>
        <dbReference type="ChEBI" id="CHEBI:15378"/>
        <dbReference type="ChEBI" id="CHEBI:29950"/>
        <dbReference type="ChEBI" id="CHEBI:30616"/>
        <dbReference type="ChEBI" id="CHEBI:33019"/>
        <dbReference type="ChEBI" id="CHEBI:33737"/>
        <dbReference type="ChEBI" id="CHEBI:33738"/>
        <dbReference type="ChEBI" id="CHEBI:61963"/>
        <dbReference type="ChEBI" id="CHEBI:65315"/>
        <dbReference type="ChEBI" id="CHEBI:136798"/>
        <dbReference type="ChEBI" id="CHEBI:456215"/>
        <dbReference type="EC" id="2.8.1.4"/>
    </reaction>
</comment>
<comment type="catalytic activity">
    <reaction evidence="1">
        <text>[ThiS sulfur-carrier protein]-C-terminal Gly-Gly-AMP + S-sulfanyl-L-cysteinyl-[cysteine desulfurase] + AH2 = [ThiS sulfur-carrier protein]-C-terminal-Gly-aminoethanethioate + L-cysteinyl-[cysteine desulfurase] + A + AMP + 2 H(+)</text>
        <dbReference type="Rhea" id="RHEA:43340"/>
        <dbReference type="Rhea" id="RHEA-COMP:12157"/>
        <dbReference type="Rhea" id="RHEA-COMP:12158"/>
        <dbReference type="Rhea" id="RHEA-COMP:12910"/>
        <dbReference type="Rhea" id="RHEA-COMP:19908"/>
        <dbReference type="ChEBI" id="CHEBI:13193"/>
        <dbReference type="ChEBI" id="CHEBI:15378"/>
        <dbReference type="ChEBI" id="CHEBI:17499"/>
        <dbReference type="ChEBI" id="CHEBI:29950"/>
        <dbReference type="ChEBI" id="CHEBI:61963"/>
        <dbReference type="ChEBI" id="CHEBI:90618"/>
        <dbReference type="ChEBI" id="CHEBI:232372"/>
        <dbReference type="ChEBI" id="CHEBI:456215"/>
    </reaction>
</comment>
<comment type="pathway">
    <text evidence="1">Cofactor biosynthesis; thiamine diphosphate biosynthesis.</text>
</comment>
<comment type="subcellular location">
    <subcellularLocation>
        <location evidence="1">Cytoplasm</location>
    </subcellularLocation>
</comment>
<comment type="similarity">
    <text evidence="1">Belongs to the ThiI family.</text>
</comment>
<sequence length="482" mass="54844">MKFIIKLFPEITIKSQSVRLRFIKILTGNIRNVLKPYDETLAVVRHWDNIEVRAKDESKRAAIVAELTRIPGIHHILAVEDRPYTDVHHIFEQTLEMNRERIEGKTFCVRVKRRGKHEFSSQDVERYVGGGLNQHVASAQVQLNRPQVTVNLEIEDERLILVTARYEGIGGYPIGTQEDVLSLISGGFDSGVSSYMLMRRGCRVHYCFFNLGGAAHEIGVRQVAHYLWKRYGSTHRVRFVAINFEPVVGEILEKVDDGQMGVVLKRMMVRAASKIAERYGVQALVTGEALGQVSSQTLTNLRLIDNASDTLILRPLISHDKEHIIKLAREIGTEDFARTMPEYCGVISKSPTVKAVKAKIEHEEQNFDFAILERMVEEATNVDIREIAEKAQEEVAEVETVASFSHNDVILDIRSNDEQEARPLEVEGVVVKSLPFYKLATQFGDLDQSKSWLLYCERGVMSRLQALYLHEQGFKNVKVYRP</sequence>
<protein>
    <recommendedName>
        <fullName evidence="1">tRNA sulfurtransferase</fullName>
        <ecNumber evidence="1">2.8.1.4</ecNumber>
    </recommendedName>
    <alternativeName>
        <fullName evidence="1">Sulfur carrier protein ThiS sulfurtransferase</fullName>
    </alternativeName>
    <alternativeName>
        <fullName evidence="1">Thiamine biosynthesis protein ThiI</fullName>
    </alternativeName>
    <alternativeName>
        <fullName evidence="1">tRNA 4-thiouridine synthase</fullName>
    </alternativeName>
</protein>
<feature type="chain" id="PRO_1000090014" description="tRNA sulfurtransferase">
    <location>
        <begin position="1"/>
        <end position="482"/>
    </location>
</feature>
<feature type="domain" description="THUMP" evidence="1">
    <location>
        <begin position="61"/>
        <end position="165"/>
    </location>
</feature>
<feature type="domain" description="Rhodanese" evidence="1">
    <location>
        <begin position="404"/>
        <end position="482"/>
    </location>
</feature>
<feature type="active site" description="Cysteine persulfide intermediate" evidence="1">
    <location>
        <position position="456"/>
    </location>
</feature>
<feature type="binding site" evidence="1">
    <location>
        <begin position="183"/>
        <end position="184"/>
    </location>
    <ligand>
        <name>ATP</name>
        <dbReference type="ChEBI" id="CHEBI:30616"/>
    </ligand>
</feature>
<feature type="binding site" evidence="1">
    <location>
        <position position="265"/>
    </location>
    <ligand>
        <name>ATP</name>
        <dbReference type="ChEBI" id="CHEBI:30616"/>
    </ligand>
</feature>
<feature type="binding site" evidence="1">
    <location>
        <position position="287"/>
    </location>
    <ligand>
        <name>ATP</name>
        <dbReference type="ChEBI" id="CHEBI:30616"/>
    </ligand>
</feature>
<feature type="binding site" evidence="1">
    <location>
        <position position="296"/>
    </location>
    <ligand>
        <name>ATP</name>
        <dbReference type="ChEBI" id="CHEBI:30616"/>
    </ligand>
</feature>
<feature type="disulfide bond" description="Redox-active" evidence="1">
    <location>
        <begin position="344"/>
        <end position="456"/>
    </location>
</feature>
<reference key="1">
    <citation type="journal article" date="2008" name="Environ. Microbiol.">
        <title>The genome of Erwinia tasmaniensis strain Et1/99, a non-pathogenic bacterium in the genus Erwinia.</title>
        <authorList>
            <person name="Kube M."/>
            <person name="Migdoll A.M."/>
            <person name="Mueller I."/>
            <person name="Kuhl H."/>
            <person name="Beck A."/>
            <person name="Reinhardt R."/>
            <person name="Geider K."/>
        </authorList>
    </citation>
    <scope>NUCLEOTIDE SEQUENCE [LARGE SCALE GENOMIC DNA]</scope>
    <source>
        <strain>DSM 17950 / CFBP 7177 / CIP 109463 / NCPPB 4357 / Et1/99</strain>
    </source>
</reference>
<accession>B2VHS0</accession>